<feature type="chain" id="PRO_1000114994" description="Small ribosomal subunit protein uS2">
    <location>
        <begin position="1"/>
        <end position="254"/>
    </location>
</feature>
<reference key="1">
    <citation type="submission" date="2004-12" db="EMBL/GenBank/DDBJ databases">
        <title>The genome sequence of Borrelia hermsii and Borrelia turicatae: comparative analysis of two agents of endemic N. America relapsing fever.</title>
        <authorList>
            <person name="Porcella S.F."/>
            <person name="Raffel S.J."/>
            <person name="Schrumpf M.E."/>
            <person name="Montgomery B."/>
            <person name="Smith T."/>
            <person name="Schwan T.G."/>
        </authorList>
    </citation>
    <scope>NUCLEOTIDE SEQUENCE [LARGE SCALE GENOMIC DNA]</scope>
    <source>
        <strain>HS1 / DAH</strain>
    </source>
</reference>
<name>RS2_BORHD</name>
<protein>
    <recommendedName>
        <fullName evidence="1">Small ribosomal subunit protein uS2</fullName>
    </recommendedName>
    <alternativeName>
        <fullName evidence="2">30S ribosomal protein S2</fullName>
    </alternativeName>
</protein>
<evidence type="ECO:0000255" key="1">
    <source>
        <dbReference type="HAMAP-Rule" id="MF_00291"/>
    </source>
</evidence>
<evidence type="ECO:0000305" key="2"/>
<accession>B2RZI8</accession>
<comment type="similarity">
    <text evidence="1">Belongs to the universal ribosomal protein uS2 family.</text>
</comment>
<keyword id="KW-0687">Ribonucleoprotein</keyword>
<keyword id="KW-0689">Ribosomal protein</keyword>
<sequence>MAVITMKSLLEAGVHFGHQVKRLDPRMKRFIFSERNEIHILDLQKTLQGIKDSYELVQSVIKSGKKVLFVGTKKQASEIIEQEAKRSDMPYVNNRWLGGMLSNFNTIKKSVQKLKKLEKMEIDGTFEMISKKEVSQLNREKLKLSKNLTGIKDMEELPGAVFIIDPKREQIVINEARKLGIPIISVVDTNCNPDVIDCPIPGNDDAIRSVALFTKIISDAILESDKEVGIQIVENLNEEDLMSEIEVKNEKKEL</sequence>
<organism>
    <name type="scientific">Borrelia hermsii (strain HS1 / DAH)</name>
    <dbReference type="NCBI Taxonomy" id="314723"/>
    <lineage>
        <taxon>Bacteria</taxon>
        <taxon>Pseudomonadati</taxon>
        <taxon>Spirochaetota</taxon>
        <taxon>Spirochaetia</taxon>
        <taxon>Spirochaetales</taxon>
        <taxon>Borreliaceae</taxon>
        <taxon>Borrelia</taxon>
    </lineage>
</organism>
<proteinExistence type="inferred from homology"/>
<gene>
    <name evidence="1" type="primary">rpsB</name>
    <name type="ordered locus">BH0123</name>
</gene>
<dbReference type="EMBL" id="CP000048">
    <property type="protein sequence ID" value="AAX16644.1"/>
    <property type="molecule type" value="Genomic_DNA"/>
</dbReference>
<dbReference type="RefSeq" id="WP_012421901.1">
    <property type="nucleotide sequence ID" value="NZ_CP073136.1"/>
</dbReference>
<dbReference type="SMR" id="B2RZI8"/>
<dbReference type="GeneID" id="71842934"/>
<dbReference type="KEGG" id="bhr:BH0123"/>
<dbReference type="HOGENOM" id="CLU_040318_1_3_12"/>
<dbReference type="Proteomes" id="UP000008834">
    <property type="component" value="Chromosome"/>
</dbReference>
<dbReference type="GO" id="GO:0022627">
    <property type="term" value="C:cytosolic small ribosomal subunit"/>
    <property type="evidence" value="ECO:0007669"/>
    <property type="project" value="TreeGrafter"/>
</dbReference>
<dbReference type="GO" id="GO:0003735">
    <property type="term" value="F:structural constituent of ribosome"/>
    <property type="evidence" value="ECO:0007669"/>
    <property type="project" value="InterPro"/>
</dbReference>
<dbReference type="GO" id="GO:0006412">
    <property type="term" value="P:translation"/>
    <property type="evidence" value="ECO:0007669"/>
    <property type="project" value="UniProtKB-UniRule"/>
</dbReference>
<dbReference type="CDD" id="cd01425">
    <property type="entry name" value="RPS2"/>
    <property type="match status" value="1"/>
</dbReference>
<dbReference type="FunFam" id="1.10.287.610:FF:000001">
    <property type="entry name" value="30S ribosomal protein S2"/>
    <property type="match status" value="1"/>
</dbReference>
<dbReference type="Gene3D" id="3.40.50.10490">
    <property type="entry name" value="Glucose-6-phosphate isomerase like protein, domain 1"/>
    <property type="match status" value="1"/>
</dbReference>
<dbReference type="Gene3D" id="1.10.287.610">
    <property type="entry name" value="Helix hairpin bin"/>
    <property type="match status" value="1"/>
</dbReference>
<dbReference type="HAMAP" id="MF_00291_B">
    <property type="entry name" value="Ribosomal_uS2_B"/>
    <property type="match status" value="1"/>
</dbReference>
<dbReference type="InterPro" id="IPR001865">
    <property type="entry name" value="Ribosomal_uS2"/>
</dbReference>
<dbReference type="InterPro" id="IPR005706">
    <property type="entry name" value="Ribosomal_uS2_bac/mit/plastid"/>
</dbReference>
<dbReference type="InterPro" id="IPR018130">
    <property type="entry name" value="Ribosomal_uS2_CS"/>
</dbReference>
<dbReference type="InterPro" id="IPR023591">
    <property type="entry name" value="Ribosomal_uS2_flav_dom_sf"/>
</dbReference>
<dbReference type="NCBIfam" id="TIGR01011">
    <property type="entry name" value="rpsB_bact"/>
    <property type="match status" value="1"/>
</dbReference>
<dbReference type="PANTHER" id="PTHR12534">
    <property type="entry name" value="30S RIBOSOMAL PROTEIN S2 PROKARYOTIC AND ORGANELLAR"/>
    <property type="match status" value="1"/>
</dbReference>
<dbReference type="PANTHER" id="PTHR12534:SF0">
    <property type="entry name" value="SMALL RIBOSOMAL SUBUNIT PROTEIN US2M"/>
    <property type="match status" value="1"/>
</dbReference>
<dbReference type="Pfam" id="PF00318">
    <property type="entry name" value="Ribosomal_S2"/>
    <property type="match status" value="1"/>
</dbReference>
<dbReference type="PRINTS" id="PR00395">
    <property type="entry name" value="RIBOSOMALS2"/>
</dbReference>
<dbReference type="SUPFAM" id="SSF52313">
    <property type="entry name" value="Ribosomal protein S2"/>
    <property type="match status" value="1"/>
</dbReference>
<dbReference type="PROSITE" id="PS00962">
    <property type="entry name" value="RIBOSOMAL_S2_1"/>
    <property type="match status" value="1"/>
</dbReference>
<dbReference type="PROSITE" id="PS00963">
    <property type="entry name" value="RIBOSOMAL_S2_2"/>
    <property type="match status" value="1"/>
</dbReference>